<feature type="chain" id="PRO_0000431724" description="Polyamine aminopropyltransferase 1">
    <location>
        <begin position="1"/>
        <end position="292"/>
    </location>
</feature>
<feature type="domain" description="PABS" evidence="1">
    <location>
        <begin position="1"/>
        <end position="244"/>
    </location>
</feature>
<feature type="active site" description="Proton acceptor" evidence="1">
    <location>
        <position position="163"/>
    </location>
</feature>
<feature type="binding site" evidence="1">
    <location>
        <position position="35"/>
    </location>
    <ligand>
        <name>S-methyl-5'-thioadenosine</name>
        <dbReference type="ChEBI" id="CHEBI:17509"/>
    </ligand>
</feature>
<feature type="binding site" evidence="1">
    <location>
        <position position="66"/>
    </location>
    <ligand>
        <name>spermidine</name>
        <dbReference type="ChEBI" id="CHEBI:57834"/>
    </ligand>
</feature>
<feature type="binding site" evidence="1">
    <location>
        <position position="90"/>
    </location>
    <ligand>
        <name>spermidine</name>
        <dbReference type="ChEBI" id="CHEBI:57834"/>
    </ligand>
</feature>
<feature type="binding site" evidence="1">
    <location>
        <position position="110"/>
    </location>
    <ligand>
        <name>S-methyl-5'-thioadenosine</name>
        <dbReference type="ChEBI" id="CHEBI:17509"/>
    </ligand>
</feature>
<feature type="binding site" evidence="1">
    <location>
        <begin position="142"/>
        <end position="143"/>
    </location>
    <ligand>
        <name>S-methyl-5'-thioadenosine</name>
        <dbReference type="ChEBI" id="CHEBI:17509"/>
    </ligand>
</feature>
<accession>A2BIX4</accession>
<gene>
    <name evidence="1 4" type="primary">speE1</name>
    <name type="ordered locus">Hbut_0057</name>
</gene>
<protein>
    <recommendedName>
        <fullName evidence="1 4">Polyamine aminopropyltransferase 1</fullName>
    </recommendedName>
    <alternativeName>
        <fullName evidence="5">Caldopentamine synthase</fullName>
    </alternativeName>
    <alternativeName>
        <fullName evidence="5">Norspermidine aminopropyltransferase</fullName>
        <ecNumber evidence="3">2.5.1.126</ecNumber>
    </alternativeName>
    <alternativeName>
        <fullName evidence="5">Norspermine aminopropyltransferase</fullName>
        <ecNumber evidence="3">2.5.1.127</ecNumber>
    </alternativeName>
    <alternativeName>
        <fullName evidence="5">Norspermine synthase</fullName>
    </alternativeName>
    <alternativeName>
        <fullName evidence="5">Spermidine aminopropyltransferase</fullName>
        <ecNumber evidence="3">2.5.1.79</ecNumber>
    </alternativeName>
    <alternativeName>
        <fullName evidence="5">Thermospermine synthase</fullName>
    </alternativeName>
    <alternativeName>
        <fullName evidence="4">Triamine/tetramine aminopropyltransferase</fullName>
    </alternativeName>
</protein>
<evidence type="ECO:0000255" key="1">
    <source>
        <dbReference type="HAMAP-Rule" id="MF_00198"/>
    </source>
</evidence>
<evidence type="ECO:0000255" key="2">
    <source>
        <dbReference type="RuleBase" id="RU003836"/>
    </source>
</evidence>
<evidence type="ECO:0000269" key="3">
    <source>
    </source>
</evidence>
<evidence type="ECO:0000303" key="4">
    <source>
    </source>
</evidence>
<evidence type="ECO:0000305" key="5">
    <source>
    </source>
</evidence>
<organism>
    <name type="scientific">Hyperthermus butylicus (strain DSM 5456 / JCM 9403 / PLM1-5)</name>
    <dbReference type="NCBI Taxonomy" id="415426"/>
    <lineage>
        <taxon>Archaea</taxon>
        <taxon>Thermoproteota</taxon>
        <taxon>Thermoprotei</taxon>
        <taxon>Desulfurococcales</taxon>
        <taxon>Pyrodictiaceae</taxon>
        <taxon>Hyperthermus</taxon>
    </lineage>
</organism>
<name>SPEE1_HYPBU</name>
<sequence length="292" mass="32856">MELGMFRLNIYQPGGPIGALYPVEKILYHGRSQYQEIMILVLRGFGKTLVLDGLIQSTESDEHIYHETLVHPAMTVHPNPRRVLILGGGEGATLREVLKHNTVEKAVMVDIDGEVVRVAREYLPEWHQGAFDDPRAQVVIMDGFEYIKEAARRGEDFDVIIMDLTDPFGPKIAAKLYTKEAIGLVKSVLRSDGILVTQAGCAALFPEAFEKVYGSVKSLFAHAEEYGVWVPSFMYVNSFVFASDKYRLTDLSMEEVDRRLRERGVETRFYSGLRHYTLIGLGGIRLLEGRGS</sequence>
<keyword id="KW-0963">Cytoplasm</keyword>
<keyword id="KW-0620">Polyamine biosynthesis</keyword>
<keyword id="KW-1185">Reference proteome</keyword>
<keyword id="KW-0808">Transferase</keyword>
<dbReference type="EC" id="2.5.1.126" evidence="3"/>
<dbReference type="EC" id="2.5.1.127" evidence="3"/>
<dbReference type="EC" id="2.5.1.79" evidence="3"/>
<dbReference type="EMBL" id="CP000493">
    <property type="protein sequence ID" value="ABM79935.1"/>
    <property type="molecule type" value="Genomic_DNA"/>
</dbReference>
<dbReference type="RefSeq" id="WP_011821252.1">
    <property type="nucleotide sequence ID" value="NC_008818.1"/>
</dbReference>
<dbReference type="SMR" id="A2BIX4"/>
<dbReference type="STRING" id="415426.Hbut_0057"/>
<dbReference type="EnsemblBacteria" id="ABM79935">
    <property type="protein sequence ID" value="ABM79935"/>
    <property type="gene ID" value="Hbut_0057"/>
</dbReference>
<dbReference type="GeneID" id="4781772"/>
<dbReference type="KEGG" id="hbu:Hbut_0057"/>
<dbReference type="eggNOG" id="arCOG00050">
    <property type="taxonomic scope" value="Archaea"/>
</dbReference>
<dbReference type="HOGENOM" id="CLU_048199_0_1_2"/>
<dbReference type="BioCyc" id="MetaCyc:MONOMER-21056"/>
<dbReference type="BRENDA" id="2.5.1.127">
    <property type="organism ID" value="10772"/>
</dbReference>
<dbReference type="Proteomes" id="UP000002593">
    <property type="component" value="Chromosome"/>
</dbReference>
<dbReference type="GO" id="GO:0005737">
    <property type="term" value="C:cytoplasm"/>
    <property type="evidence" value="ECO:0007669"/>
    <property type="project" value="UniProtKB-SubCell"/>
</dbReference>
<dbReference type="GO" id="GO:0004766">
    <property type="term" value="F:spermidine synthase activity"/>
    <property type="evidence" value="ECO:0007669"/>
    <property type="project" value="UniProtKB-UniRule"/>
</dbReference>
<dbReference type="GO" id="GO:0050314">
    <property type="term" value="F:sym-norspermidine synthase activity"/>
    <property type="evidence" value="ECO:0000314"/>
    <property type="project" value="UniProtKB"/>
</dbReference>
<dbReference type="GO" id="GO:0010487">
    <property type="term" value="F:thermospermine synthase activity"/>
    <property type="evidence" value="ECO:0000314"/>
    <property type="project" value="UniProtKB"/>
</dbReference>
<dbReference type="GO" id="GO:0006596">
    <property type="term" value="P:polyamine biosynthetic process"/>
    <property type="evidence" value="ECO:0000314"/>
    <property type="project" value="UniProtKB"/>
</dbReference>
<dbReference type="GO" id="GO:0008295">
    <property type="term" value="P:spermidine biosynthetic process"/>
    <property type="evidence" value="ECO:0007669"/>
    <property type="project" value="UniProtKB-UniRule"/>
</dbReference>
<dbReference type="CDD" id="cd02440">
    <property type="entry name" value="AdoMet_MTases"/>
    <property type="match status" value="1"/>
</dbReference>
<dbReference type="FunFam" id="3.40.50.150:FF:000088">
    <property type="entry name" value="Polyamine aminopropyltransferase"/>
    <property type="match status" value="1"/>
</dbReference>
<dbReference type="Gene3D" id="2.30.140.10">
    <property type="entry name" value="Spermidine synthase, tetramerisation domain"/>
    <property type="match status" value="1"/>
</dbReference>
<dbReference type="Gene3D" id="3.40.50.150">
    <property type="entry name" value="Vaccinia Virus protein VP39"/>
    <property type="match status" value="1"/>
</dbReference>
<dbReference type="HAMAP" id="MF_00198">
    <property type="entry name" value="Spermidine_synth"/>
    <property type="match status" value="1"/>
</dbReference>
<dbReference type="InterPro" id="IPR030374">
    <property type="entry name" value="PABS"/>
</dbReference>
<dbReference type="InterPro" id="IPR030373">
    <property type="entry name" value="PABS_CS"/>
</dbReference>
<dbReference type="InterPro" id="IPR029063">
    <property type="entry name" value="SAM-dependent_MTases_sf"/>
</dbReference>
<dbReference type="InterPro" id="IPR001045">
    <property type="entry name" value="Spermi_synthase"/>
</dbReference>
<dbReference type="InterPro" id="IPR035246">
    <property type="entry name" value="Spermidine_synt_N"/>
</dbReference>
<dbReference type="InterPro" id="IPR037163">
    <property type="entry name" value="Spermidine_synt_N_sf"/>
</dbReference>
<dbReference type="NCBIfam" id="NF002010">
    <property type="entry name" value="PRK00811.1"/>
    <property type="match status" value="1"/>
</dbReference>
<dbReference type="PANTHER" id="PTHR43317">
    <property type="entry name" value="THERMOSPERMINE SYNTHASE ACAULIS5"/>
    <property type="match status" value="1"/>
</dbReference>
<dbReference type="PANTHER" id="PTHR43317:SF1">
    <property type="entry name" value="THERMOSPERMINE SYNTHASE ACAULIS5"/>
    <property type="match status" value="1"/>
</dbReference>
<dbReference type="Pfam" id="PF17284">
    <property type="entry name" value="Spermine_synt_N"/>
    <property type="match status" value="1"/>
</dbReference>
<dbReference type="Pfam" id="PF01564">
    <property type="entry name" value="Spermine_synth"/>
    <property type="match status" value="1"/>
</dbReference>
<dbReference type="SUPFAM" id="SSF53335">
    <property type="entry name" value="S-adenosyl-L-methionine-dependent methyltransferases"/>
    <property type="match status" value="1"/>
</dbReference>
<dbReference type="PROSITE" id="PS01330">
    <property type="entry name" value="PABS_1"/>
    <property type="match status" value="1"/>
</dbReference>
<dbReference type="PROSITE" id="PS51006">
    <property type="entry name" value="PABS_2"/>
    <property type="match status" value="1"/>
</dbReference>
<comment type="function">
    <text evidence="3">Involved in the biosynthesis of polyamines which are thought to support the growth of thermophilic microorganisms under high-temperature conditions. It seems that long-chain and branched-chain of polyamines effectively stabilize DNA and RNA, respectively. Catalyzes the irreversible transfer of a propylamine group from the amino donor S-adenosylmethioninamine (decarboxy-AdoMet) to norspermidine, spermidine and norspermine to yield norspermine, thermospermine and caldopentamine, respectively. It can also synthesize sym-norspermidine (bis(3-aminopropyl)amine) from 1,3-diaminopropane with a very low activity. The biosynthesis of caldohexamine and caldoheptamine from caldopentamine has been also observed.</text>
</comment>
<comment type="catalytic activity">
    <reaction evidence="3">
        <text>norspermine + S-adenosyl 3-(methylsulfanyl)propylamine = caldopentamine + S-methyl-5'-thioadenosine + 2 H(+)</text>
        <dbReference type="Rhea" id="RHEA:42868"/>
        <dbReference type="ChEBI" id="CHEBI:15378"/>
        <dbReference type="ChEBI" id="CHEBI:17509"/>
        <dbReference type="ChEBI" id="CHEBI:57443"/>
        <dbReference type="ChEBI" id="CHEBI:58704"/>
        <dbReference type="ChEBI" id="CHEBI:82769"/>
        <dbReference type="EC" id="2.5.1.127"/>
    </reaction>
</comment>
<comment type="catalytic activity">
    <reaction evidence="3">
        <text>norspermidine + S-adenosyl 3-(methylsulfanyl)propylamine = norspermine + S-methyl-5'-thioadenosine + H(+)</text>
        <dbReference type="Rhea" id="RHEA:42864"/>
        <dbReference type="ChEBI" id="CHEBI:15378"/>
        <dbReference type="ChEBI" id="CHEBI:17509"/>
        <dbReference type="ChEBI" id="CHEBI:57443"/>
        <dbReference type="ChEBI" id="CHEBI:57920"/>
        <dbReference type="ChEBI" id="CHEBI:58704"/>
        <dbReference type="EC" id="2.5.1.126"/>
    </reaction>
</comment>
<comment type="catalytic activity">
    <reaction evidence="3">
        <text>S-adenosyl 3-(methylsulfanyl)propylamine + spermidine = thermospermine + S-methyl-5'-thioadenosine + H(+)</text>
        <dbReference type="Rhea" id="RHEA:30515"/>
        <dbReference type="ChEBI" id="CHEBI:15378"/>
        <dbReference type="ChEBI" id="CHEBI:17509"/>
        <dbReference type="ChEBI" id="CHEBI:57443"/>
        <dbReference type="ChEBI" id="CHEBI:57834"/>
        <dbReference type="ChEBI" id="CHEBI:59903"/>
        <dbReference type="EC" id="2.5.1.79"/>
    </reaction>
</comment>
<comment type="subunit">
    <text evidence="1">Homodimer or homotetramer.</text>
</comment>
<comment type="subcellular location">
    <subcellularLocation>
        <location evidence="1">Cytoplasm</location>
    </subcellularLocation>
</comment>
<comment type="similarity">
    <text evidence="1 2">Belongs to the spermidine/spermine synthase family.</text>
</comment>
<proteinExistence type="evidence at protein level"/>
<reference key="1">
    <citation type="journal article" date="2007" name="Archaea">
        <title>The genome of Hyperthermus butylicus: a sulfur-reducing, peptide fermenting, neutrophilic Crenarchaeote growing up to 108 degrees C.</title>
        <authorList>
            <person name="Bruegger K."/>
            <person name="Chen L."/>
            <person name="Stark M."/>
            <person name="Zibat A."/>
            <person name="Redder P."/>
            <person name="Ruepp A."/>
            <person name="Awayez M."/>
            <person name="She Q."/>
            <person name="Garrett R.A."/>
            <person name="Klenk H.-P."/>
        </authorList>
    </citation>
    <scope>NUCLEOTIDE SEQUENCE [LARGE SCALE GENOMIC DNA]</scope>
    <source>
        <strain>DSM 5456 / JCM 9403 / PLM1-5</strain>
    </source>
</reference>
<reference key="2">
    <citation type="journal article" date="2009" name="FEBS Lett.">
        <title>Biosynthesis of long-chain polyamines by crenarchaeal polyamine synthases from Hyperthermus butylicus and Pyrobaculum aerophilum.</title>
        <authorList>
            <person name="Knott J.M."/>
        </authorList>
    </citation>
    <scope>FUNCTION</scope>
    <scope>CATALYTIC ACTIVITY</scope>
    <scope>SUBSTRATE SPECIFICITY</scope>
    <source>
        <strain>DSM 5456 / JCM 9403 / PLM1-5</strain>
    </source>
</reference>